<feature type="signal peptide" evidence="1">
    <location>
        <begin position="1"/>
        <end position="18"/>
    </location>
</feature>
<feature type="propeptide" id="PRO_0000021595">
    <location>
        <begin position="19"/>
        <end position="25"/>
    </location>
</feature>
<feature type="chain" id="PRO_0000021596" description="Lipase B">
    <location>
        <begin position="26"/>
        <end position="342"/>
    </location>
</feature>
<feature type="active site" evidence="3">
    <location>
        <position position="130"/>
    </location>
</feature>
<feature type="active site" evidence="3">
    <location>
        <position position="212"/>
    </location>
</feature>
<feature type="active site">
    <location>
        <position position="249"/>
    </location>
</feature>
<feature type="glycosylation site" description="N-linked (GlcNAc...) asparagine" evidence="2 3">
    <location>
        <position position="99"/>
    </location>
</feature>
<feature type="disulfide bond">
    <location>
        <begin position="47"/>
        <end position="89"/>
    </location>
</feature>
<feature type="disulfide bond">
    <location>
        <begin position="241"/>
        <end position="283"/>
    </location>
</feature>
<feature type="disulfide bond">
    <location>
        <begin position="318"/>
        <end position="336"/>
    </location>
</feature>
<feature type="helix" evidence="7">
    <location>
        <begin position="38"/>
        <end position="43"/>
    </location>
</feature>
<feature type="strand" evidence="7">
    <location>
        <begin position="45"/>
        <end position="47"/>
    </location>
</feature>
<feature type="helix" evidence="4">
    <location>
        <begin position="52"/>
        <end position="54"/>
    </location>
</feature>
<feature type="strand" evidence="7">
    <location>
        <begin position="56"/>
        <end position="62"/>
    </location>
</feature>
<feature type="helix" evidence="7">
    <location>
        <begin position="69"/>
        <end position="73"/>
    </location>
</feature>
<feature type="turn" evidence="7">
    <location>
        <begin position="74"/>
        <end position="76"/>
    </location>
</feature>
<feature type="helix" evidence="7">
    <location>
        <begin position="77"/>
        <end position="83"/>
    </location>
</feature>
<feature type="strand" evidence="7">
    <location>
        <begin position="87"/>
        <end position="91"/>
    </location>
</feature>
<feature type="turn" evidence="7">
    <location>
        <begin position="94"/>
        <end position="97"/>
    </location>
</feature>
<feature type="helix" evidence="7">
    <location>
        <begin position="101"/>
        <end position="118"/>
    </location>
</feature>
<feature type="strand" evidence="7">
    <location>
        <begin position="124"/>
        <end position="129"/>
    </location>
</feature>
<feature type="helix" evidence="7">
    <location>
        <begin position="131"/>
        <end position="142"/>
    </location>
</feature>
<feature type="helix" evidence="7">
    <location>
        <begin position="144"/>
        <end position="146"/>
    </location>
</feature>
<feature type="turn" evidence="7">
    <location>
        <begin position="147"/>
        <end position="149"/>
    </location>
</feature>
<feature type="strand" evidence="7">
    <location>
        <begin position="150"/>
        <end position="157"/>
    </location>
</feature>
<feature type="helix" evidence="7">
    <location>
        <begin position="164"/>
        <end position="166"/>
    </location>
</feature>
<feature type="helix" evidence="7">
    <location>
        <begin position="167"/>
        <end position="171"/>
    </location>
</feature>
<feature type="helix" evidence="7">
    <location>
        <begin position="177"/>
        <end position="181"/>
    </location>
</feature>
<feature type="helix" evidence="7">
    <location>
        <begin position="187"/>
        <end position="194"/>
    </location>
</feature>
<feature type="turn" evidence="7">
    <location>
        <begin position="195"/>
        <end position="198"/>
    </location>
</feature>
<feature type="strand" evidence="7">
    <location>
        <begin position="204"/>
        <end position="208"/>
    </location>
</feature>
<feature type="strand" evidence="7">
    <location>
        <begin position="213"/>
        <end position="215"/>
    </location>
</feature>
<feature type="strand" evidence="7">
    <location>
        <begin position="220"/>
        <end position="222"/>
    </location>
</feature>
<feature type="strand" evidence="7">
    <location>
        <begin position="232"/>
        <end position="236"/>
    </location>
</feature>
<feature type="helix" evidence="7">
    <location>
        <begin position="237"/>
        <end position="241"/>
    </location>
</feature>
<feature type="helix" evidence="7">
    <location>
        <begin position="251"/>
        <end position="254"/>
    </location>
</feature>
<feature type="helix" evidence="7">
    <location>
        <begin position="256"/>
        <end position="267"/>
    </location>
</feature>
<feature type="strand" evidence="5">
    <location>
        <begin position="269"/>
        <end position="272"/>
    </location>
</feature>
<feature type="helix" evidence="7">
    <location>
        <begin position="275"/>
        <end position="277"/>
    </location>
</feature>
<feature type="helix" evidence="7">
    <location>
        <begin position="280"/>
        <end position="282"/>
    </location>
</feature>
<feature type="strand" evidence="6">
    <location>
        <begin position="286"/>
        <end position="288"/>
    </location>
</feature>
<feature type="helix" evidence="7">
    <location>
        <begin position="293"/>
        <end position="300"/>
    </location>
</feature>
<feature type="helix" evidence="7">
    <location>
        <begin position="303"/>
        <end position="312"/>
    </location>
</feature>
<feature type="strand" evidence="7">
    <location>
        <begin position="316"/>
        <end position="318"/>
    </location>
</feature>
<feature type="turn" evidence="7">
    <location>
        <begin position="324"/>
        <end position="326"/>
    </location>
</feature>
<feature type="helix" evidence="7">
    <location>
        <begin position="327"/>
        <end position="329"/>
    </location>
</feature>
<reference key="1">
    <citation type="journal article" date="1994" name="Structure">
        <title>The sequence, crystal structure determination and refinement of two crystal forms of lipase B from Candida antarctica.</title>
        <authorList>
            <person name="Uppenberg J."/>
            <person name="Hansen M.T."/>
            <person name="Patkar S."/>
            <person name="Jones T.A."/>
        </authorList>
    </citation>
    <scope>NUCLEOTIDE SEQUENCE [GENOMIC DNA]</scope>
    <scope>X-RAY CRYSTALLOGRAPHY (1.55 ANGSTROMS)</scope>
    <scope>GLYCOSYLATION AT ASN-99</scope>
    <source>
        <strain>LF058</strain>
    </source>
</reference>
<reference key="2">
    <citation type="journal article" date="1994" name="Structure">
        <authorList>
            <person name="Uppenberg J."/>
            <person name="Hansen M.T."/>
            <person name="Patkar S."/>
            <person name="Jones T.A."/>
        </authorList>
    </citation>
    <scope>ERRATUM OF PUBMED:8087556</scope>
</reference>
<reference key="3">
    <citation type="journal article" date="1995" name="Biochemistry">
        <title>Crystallographic and molecular-modeling studies of lipase B from Candida antarctica reveal a stereospecificity pocket for secondary alcohols.</title>
        <authorList>
            <person name="Uppenberg J."/>
            <person name="Oehrner N."/>
            <person name="Norin M."/>
            <person name="Hult K."/>
            <person name="Kleywegt G.J."/>
            <person name="Patkar S."/>
            <person name="Waagen V."/>
            <person name="Anthonsen T."/>
            <person name="Jones T.A."/>
        </authorList>
    </citation>
    <scope>X-RAY CRYSTALLOGRAPHY (2.5 ANGSTROMS)</scope>
    <scope>GLYCOSYLATION AT ASN-99</scope>
</reference>
<dbReference type="EC" id="3.1.1.3"/>
<dbReference type="EMBL" id="Z30645">
    <property type="protein sequence ID" value="CAA83122.1"/>
    <property type="molecule type" value="Genomic_DNA"/>
</dbReference>
<dbReference type="PIR" id="S47165">
    <property type="entry name" value="S47165"/>
</dbReference>
<dbReference type="PDB" id="1LBS">
    <property type="method" value="X-ray"/>
    <property type="resolution" value="2.60 A"/>
    <property type="chains" value="A/B/C/D/E/F=26-342"/>
</dbReference>
<dbReference type="PDB" id="1LBT">
    <property type="method" value="X-ray"/>
    <property type="resolution" value="2.50 A"/>
    <property type="chains" value="A/B=26-342"/>
</dbReference>
<dbReference type="PDB" id="1TCA">
    <property type="method" value="X-ray"/>
    <property type="resolution" value="1.55 A"/>
    <property type="chains" value="A=26-342"/>
</dbReference>
<dbReference type="PDB" id="1TCB">
    <property type="method" value="X-ray"/>
    <property type="resolution" value="2.10 A"/>
    <property type="chains" value="A/B=26-342"/>
</dbReference>
<dbReference type="PDB" id="1TCC">
    <property type="method" value="X-ray"/>
    <property type="resolution" value="2.50 A"/>
    <property type="chains" value="A/B=26-342"/>
</dbReference>
<dbReference type="PDB" id="3ICV">
    <property type="method" value="X-ray"/>
    <property type="resolution" value="1.49 A"/>
    <property type="chains" value="A=26-340"/>
</dbReference>
<dbReference type="PDB" id="3ICW">
    <property type="method" value="X-ray"/>
    <property type="resolution" value="1.69 A"/>
    <property type="chains" value="A=26-340"/>
</dbReference>
<dbReference type="PDB" id="3W9B">
    <property type="method" value="X-ray"/>
    <property type="resolution" value="2.90 A"/>
    <property type="chains" value="A/B/C/D=26-342"/>
</dbReference>
<dbReference type="PDB" id="4K5Q">
    <property type="method" value="X-ray"/>
    <property type="resolution" value="1.49 A"/>
    <property type="chains" value="A=26-342"/>
</dbReference>
<dbReference type="PDB" id="4K6G">
    <property type="method" value="X-ray"/>
    <property type="resolution" value="1.50 A"/>
    <property type="chains" value="A/B=26-342"/>
</dbReference>
<dbReference type="PDB" id="4K6H">
    <property type="method" value="X-ray"/>
    <property type="resolution" value="1.60 A"/>
    <property type="chains" value="A/B=26-342"/>
</dbReference>
<dbReference type="PDB" id="4K6K">
    <property type="method" value="X-ray"/>
    <property type="resolution" value="1.60 A"/>
    <property type="chains" value="A/B=26-342"/>
</dbReference>
<dbReference type="PDB" id="4ZV7">
    <property type="method" value="X-ray"/>
    <property type="resolution" value="2.00 A"/>
    <property type="chains" value="A=26-342"/>
</dbReference>
<dbReference type="PDB" id="5A6V">
    <property type="method" value="X-ray"/>
    <property type="resolution" value="2.28 A"/>
    <property type="chains" value="A/B=26-342"/>
</dbReference>
<dbReference type="PDB" id="5A71">
    <property type="method" value="X-ray"/>
    <property type="resolution" value="0.91 A"/>
    <property type="chains" value="A/B=26-342"/>
</dbReference>
<dbReference type="PDB" id="5GV5">
    <property type="method" value="X-ray"/>
    <property type="resolution" value="2.89 A"/>
    <property type="chains" value="A/B/C/D/E/F/G/H=26-342"/>
</dbReference>
<dbReference type="PDB" id="6ISP">
    <property type="method" value="X-ray"/>
    <property type="resolution" value="1.88 A"/>
    <property type="chains" value="A/B/C/D=26-342"/>
</dbReference>
<dbReference type="PDB" id="6ISQ">
    <property type="method" value="X-ray"/>
    <property type="resolution" value="1.86 A"/>
    <property type="chains" value="A/B=26-342"/>
</dbReference>
<dbReference type="PDB" id="6ISR">
    <property type="method" value="X-ray"/>
    <property type="resolution" value="2.60 A"/>
    <property type="chains" value="A/B=26-342"/>
</dbReference>
<dbReference type="PDB" id="6J1P">
    <property type="method" value="X-ray"/>
    <property type="resolution" value="1.76 A"/>
    <property type="chains" value="A/B=26-342"/>
</dbReference>
<dbReference type="PDB" id="6J1Q">
    <property type="method" value="X-ray"/>
    <property type="resolution" value="1.60 A"/>
    <property type="chains" value="A/B=26-342"/>
</dbReference>
<dbReference type="PDB" id="6J1R">
    <property type="method" value="X-ray"/>
    <property type="resolution" value="1.60 A"/>
    <property type="chains" value="A/B=26-342"/>
</dbReference>
<dbReference type="PDB" id="6J1S">
    <property type="method" value="X-ray"/>
    <property type="resolution" value="1.83 A"/>
    <property type="chains" value="A/B=26-342"/>
</dbReference>
<dbReference type="PDB" id="6J1T">
    <property type="method" value="X-ray"/>
    <property type="resolution" value="1.78 A"/>
    <property type="chains" value="A/B=26-342"/>
</dbReference>
<dbReference type="PDB" id="6TP8">
    <property type="method" value="X-ray"/>
    <property type="resolution" value="1.55 A"/>
    <property type="chains" value="A/B/C=26-342"/>
</dbReference>
<dbReference type="PDBsum" id="1LBS"/>
<dbReference type="PDBsum" id="1LBT"/>
<dbReference type="PDBsum" id="1TCA"/>
<dbReference type="PDBsum" id="1TCB"/>
<dbReference type="PDBsum" id="1TCC"/>
<dbReference type="PDBsum" id="3ICV"/>
<dbReference type="PDBsum" id="3ICW"/>
<dbReference type="PDBsum" id="3W9B"/>
<dbReference type="PDBsum" id="4K5Q"/>
<dbReference type="PDBsum" id="4K6G"/>
<dbReference type="PDBsum" id="4K6H"/>
<dbReference type="PDBsum" id="4K6K"/>
<dbReference type="PDBsum" id="4ZV7"/>
<dbReference type="PDBsum" id="5A6V"/>
<dbReference type="PDBsum" id="5A71"/>
<dbReference type="PDBsum" id="5GV5"/>
<dbReference type="PDBsum" id="6ISP"/>
<dbReference type="PDBsum" id="6ISQ"/>
<dbReference type="PDBsum" id="6ISR"/>
<dbReference type="PDBsum" id="6J1P"/>
<dbReference type="PDBsum" id="6J1Q"/>
<dbReference type="PDBsum" id="6J1R"/>
<dbReference type="PDBsum" id="6J1S"/>
<dbReference type="PDBsum" id="6J1T"/>
<dbReference type="PDBsum" id="6TP8"/>
<dbReference type="SASBDB" id="P41365"/>
<dbReference type="SMR" id="P41365"/>
<dbReference type="ESTHER" id="canar-LipB">
    <property type="family name" value="Canar_LipB"/>
</dbReference>
<dbReference type="iPTMnet" id="P41365"/>
<dbReference type="MetOSite" id="P41365"/>
<dbReference type="BioCyc" id="MetaCyc:MONOMER-21933"/>
<dbReference type="SABIO-RK" id="P41365"/>
<dbReference type="EvolutionaryTrace" id="P41365"/>
<dbReference type="GO" id="GO:0004806">
    <property type="term" value="F:triacylglycerol lipase activity"/>
    <property type="evidence" value="ECO:0007669"/>
    <property type="project" value="UniProtKB-EC"/>
</dbReference>
<dbReference type="GO" id="GO:0016042">
    <property type="term" value="P:lipid catabolic process"/>
    <property type="evidence" value="ECO:0007669"/>
    <property type="project" value="UniProtKB-KW"/>
</dbReference>
<dbReference type="Gene3D" id="3.40.50.1820">
    <property type="entry name" value="alpha/beta hydrolase"/>
    <property type="match status" value="1"/>
</dbReference>
<dbReference type="InterPro" id="IPR029058">
    <property type="entry name" value="AB_hydrolase_fold"/>
</dbReference>
<dbReference type="InterPro" id="IPR053228">
    <property type="entry name" value="Stereospecific_Lipase"/>
</dbReference>
<dbReference type="PANTHER" id="PTHR37574">
    <property type="entry name" value="LIPASE B"/>
    <property type="match status" value="1"/>
</dbReference>
<dbReference type="PANTHER" id="PTHR37574:SF1">
    <property type="entry name" value="LIPASE B"/>
    <property type="match status" value="1"/>
</dbReference>
<dbReference type="SUPFAM" id="SSF53474">
    <property type="entry name" value="alpha/beta-Hydrolases"/>
    <property type="match status" value="1"/>
</dbReference>
<accession>P41365</accession>
<evidence type="ECO:0000255" key="1"/>
<evidence type="ECO:0000269" key="2">
    <source>
    </source>
</evidence>
<evidence type="ECO:0000269" key="3">
    <source>
    </source>
</evidence>
<evidence type="ECO:0007829" key="4">
    <source>
        <dbReference type="PDB" id="1LBT"/>
    </source>
</evidence>
<evidence type="ECO:0007829" key="5">
    <source>
        <dbReference type="PDB" id="1TCA"/>
    </source>
</evidence>
<evidence type="ECO:0007829" key="6">
    <source>
        <dbReference type="PDB" id="3ICW"/>
    </source>
</evidence>
<evidence type="ECO:0007829" key="7">
    <source>
        <dbReference type="PDB" id="5A71"/>
    </source>
</evidence>
<sequence length="342" mass="35518">MKLLSLTGVAGVLATCVAATPLVKRLPSGSDPAFSQPKSVLDAGLTCQGASPSSVSKPILLVPGTGTTGPQSFDSNWIPLSTQLGYTPCWISPPPFMLNDTQVNTEYMVNAITALYAGSGNNKLPVLTWSQGGLVAQWGLTFFPSIRSKVDRLMAFAPDYKGTVLAGPLDALAVSAPSVWQQTTGSALTTALRNAGGLTQIVPTTNLYSATDEIVQPQVSNSPLDSSYLFNGKNVQAQAVCGPLFVIDHAGSLTSQFSYVVGRSALRSTTGQARSADYGITDCNPLPANDLTPEQKVAAAALLAPAAAAIVAGPKQNCEPDLMPYARPFAVGKRTCSGIVTP</sequence>
<name>LIPB_PSEA2</name>
<organism>
    <name type="scientific">Pseudozyma antarctica</name>
    <name type="common">Yeast</name>
    <name type="synonym">Candida antarctica</name>
    <dbReference type="NCBI Taxonomy" id="84753"/>
    <lineage>
        <taxon>Eukaryota</taxon>
        <taxon>Fungi</taxon>
        <taxon>Dikarya</taxon>
        <taxon>Basidiomycota</taxon>
        <taxon>Ustilaginomycotina</taxon>
        <taxon>Ustilaginomycetes</taxon>
        <taxon>Ustilaginales</taxon>
        <taxon>Ustilaginaceae</taxon>
        <taxon>Moesziomyces</taxon>
    </lineage>
</organism>
<proteinExistence type="evidence at protein level"/>
<keyword id="KW-0002">3D-structure</keyword>
<keyword id="KW-0165">Cleavage on pair of basic residues</keyword>
<keyword id="KW-1015">Disulfide bond</keyword>
<keyword id="KW-0325">Glycoprotein</keyword>
<keyword id="KW-0378">Hydrolase</keyword>
<keyword id="KW-0442">Lipid degradation</keyword>
<keyword id="KW-0443">Lipid metabolism</keyword>
<keyword id="KW-0732">Signal</keyword>
<keyword id="KW-0865">Zymogen</keyword>
<protein>
    <recommendedName>
        <fullName>Lipase B</fullName>
        <ecNumber>3.1.1.3</ecNumber>
    </recommendedName>
    <alternativeName>
        <fullName>CALB</fullName>
    </alternativeName>
</protein>
<comment type="function">
    <text>Hydrolysis of triglycerides. Is very stereospecific both in hydrolysis and in organic synthesis and has a potentially important application in glucolipid synthesis.</text>
</comment>
<comment type="catalytic activity">
    <reaction>
        <text>a triacylglycerol + H2O = a diacylglycerol + a fatty acid + H(+)</text>
        <dbReference type="Rhea" id="RHEA:12044"/>
        <dbReference type="ChEBI" id="CHEBI:15377"/>
        <dbReference type="ChEBI" id="CHEBI:15378"/>
        <dbReference type="ChEBI" id="CHEBI:17855"/>
        <dbReference type="ChEBI" id="CHEBI:18035"/>
        <dbReference type="ChEBI" id="CHEBI:28868"/>
        <dbReference type="EC" id="3.1.1.3"/>
    </reaction>
</comment>